<reference key="1">
    <citation type="journal article" date="2003" name="Proc. Natl. Acad. Sci. U.S.A.">
        <title>The complete genome sequence of Chromobacterium violaceum reveals remarkable and exploitable bacterial adaptability.</title>
        <authorList>
            <person name="Vasconcelos A.T.R."/>
            <person name="de Almeida D.F."/>
            <person name="Hungria M."/>
            <person name="Guimaraes C.T."/>
            <person name="Antonio R.V."/>
            <person name="Almeida F.C."/>
            <person name="de Almeida L.G.P."/>
            <person name="de Almeida R."/>
            <person name="Alves-Gomes J.A."/>
            <person name="Andrade E.M."/>
            <person name="Araripe J."/>
            <person name="de Araujo M.F.F."/>
            <person name="Astolfi-Filho S."/>
            <person name="Azevedo V."/>
            <person name="Baptista A.J."/>
            <person name="Bataus L.A.M."/>
            <person name="Batista J.S."/>
            <person name="Belo A."/>
            <person name="van den Berg C."/>
            <person name="Bogo M."/>
            <person name="Bonatto S."/>
            <person name="Bordignon J."/>
            <person name="Brigido M.M."/>
            <person name="Brito C.A."/>
            <person name="Brocchi M."/>
            <person name="Burity H.A."/>
            <person name="Camargo A.A."/>
            <person name="Cardoso D.D.P."/>
            <person name="Carneiro N.P."/>
            <person name="Carraro D.M."/>
            <person name="Carvalho C.M.B."/>
            <person name="Cascardo J.C.M."/>
            <person name="Cavada B.S."/>
            <person name="Chueire L.M.O."/>
            <person name="Creczynski-Pasa T.B."/>
            <person name="Cunha-Junior N.C."/>
            <person name="Fagundes N."/>
            <person name="Falcao C.L."/>
            <person name="Fantinatti F."/>
            <person name="Farias I.P."/>
            <person name="Felipe M.S.S."/>
            <person name="Ferrari L.P."/>
            <person name="Ferro J.A."/>
            <person name="Ferro M.I.T."/>
            <person name="Franco G.R."/>
            <person name="Freitas N.S.A."/>
            <person name="Furlan L.R."/>
            <person name="Gazzinelli R.T."/>
            <person name="Gomes E.A."/>
            <person name="Goncalves P.R."/>
            <person name="Grangeiro T.B."/>
            <person name="Grattapaglia D."/>
            <person name="Grisard E.C."/>
            <person name="Hanna E.S."/>
            <person name="Jardim S.N."/>
            <person name="Laurino J."/>
            <person name="Leoi L.C.T."/>
            <person name="Lima L.F.A."/>
            <person name="Loureiro M.F."/>
            <person name="Lyra M.C.C.P."/>
            <person name="Madeira H.M.F."/>
            <person name="Manfio G.P."/>
            <person name="Maranhao A.Q."/>
            <person name="Martins W.S."/>
            <person name="di Mauro S.M.Z."/>
            <person name="de Medeiros S.R.B."/>
            <person name="Meissner R.V."/>
            <person name="Moreira M.A.M."/>
            <person name="Nascimento F.F."/>
            <person name="Nicolas M.F."/>
            <person name="Oliveira J.G."/>
            <person name="Oliveira S.C."/>
            <person name="Paixao R.F.C."/>
            <person name="Parente J.A."/>
            <person name="Pedrosa F.O."/>
            <person name="Pena S.D.J."/>
            <person name="Pereira J.O."/>
            <person name="Pereira M."/>
            <person name="Pinto L.S.R.C."/>
            <person name="Pinto L.S."/>
            <person name="Porto J.I.R."/>
            <person name="Potrich D.P."/>
            <person name="Ramalho-Neto C.E."/>
            <person name="Reis A.M.M."/>
            <person name="Rigo L.U."/>
            <person name="Rondinelli E."/>
            <person name="Santos E.B.P."/>
            <person name="Santos F.R."/>
            <person name="Schneider M.P.C."/>
            <person name="Seuanez H.N."/>
            <person name="Silva A.M.R."/>
            <person name="da Silva A.L.C."/>
            <person name="Silva D.W."/>
            <person name="Silva R."/>
            <person name="Simoes I.C."/>
            <person name="Simon D."/>
            <person name="Soares C.M.A."/>
            <person name="Soares R.B.A."/>
            <person name="Souza E.M."/>
            <person name="Souza K.R.L."/>
            <person name="Souza R.C."/>
            <person name="Steffens M.B.R."/>
            <person name="Steindel M."/>
            <person name="Teixeira S.R."/>
            <person name="Urmenyi T."/>
            <person name="Vettore A."/>
            <person name="Wassem R."/>
            <person name="Zaha A."/>
            <person name="Simpson A.J.G."/>
        </authorList>
    </citation>
    <scope>NUCLEOTIDE SEQUENCE [LARGE SCALE GENOMIC DNA]</scope>
    <source>
        <strain>ATCC 12472 / DSM 30191 / JCM 1249 / CCUG 213 / NBRC 12614 / NCIMB 9131 / NCTC 9757 / MK</strain>
    </source>
</reference>
<accession>Q7NT87</accession>
<protein>
    <recommendedName>
        <fullName evidence="1">5-oxoprolinase subunit A</fullName>
        <shortName evidence="1">5-OPase subunit A</shortName>
        <ecNumber evidence="1">3.5.2.9</ecNumber>
    </recommendedName>
    <alternativeName>
        <fullName evidence="1">5-oxoprolinase (ATP-hydrolyzing) subunit A</fullName>
    </alternativeName>
</protein>
<proteinExistence type="inferred from homology"/>
<keyword id="KW-0067">ATP-binding</keyword>
<keyword id="KW-0378">Hydrolase</keyword>
<keyword id="KW-0547">Nucleotide-binding</keyword>
<keyword id="KW-1185">Reference proteome</keyword>
<gene>
    <name evidence="1" type="primary">pxpA</name>
    <name type="ordered locus">CV_3173</name>
</gene>
<dbReference type="EC" id="3.5.2.9" evidence="1"/>
<dbReference type="EMBL" id="AE016825">
    <property type="protein sequence ID" value="AAQ60839.1"/>
    <property type="molecule type" value="Genomic_DNA"/>
</dbReference>
<dbReference type="RefSeq" id="WP_011136720.1">
    <property type="nucleotide sequence ID" value="NC_005085.1"/>
</dbReference>
<dbReference type="SMR" id="Q7NT87"/>
<dbReference type="STRING" id="243365.CV_3173"/>
<dbReference type="KEGG" id="cvi:CV_3173"/>
<dbReference type="eggNOG" id="COG1540">
    <property type="taxonomic scope" value="Bacteria"/>
</dbReference>
<dbReference type="HOGENOM" id="CLU_069535_0_0_4"/>
<dbReference type="OrthoDB" id="9773478at2"/>
<dbReference type="Proteomes" id="UP000001424">
    <property type="component" value="Chromosome"/>
</dbReference>
<dbReference type="GO" id="GO:0017168">
    <property type="term" value="F:5-oxoprolinase (ATP-hydrolyzing) activity"/>
    <property type="evidence" value="ECO:0007669"/>
    <property type="project" value="UniProtKB-UniRule"/>
</dbReference>
<dbReference type="GO" id="GO:0005524">
    <property type="term" value="F:ATP binding"/>
    <property type="evidence" value="ECO:0007669"/>
    <property type="project" value="UniProtKB-UniRule"/>
</dbReference>
<dbReference type="GO" id="GO:0005975">
    <property type="term" value="P:carbohydrate metabolic process"/>
    <property type="evidence" value="ECO:0007669"/>
    <property type="project" value="InterPro"/>
</dbReference>
<dbReference type="CDD" id="cd10800">
    <property type="entry name" value="LamB_YcsF_YbgL_like"/>
    <property type="match status" value="1"/>
</dbReference>
<dbReference type="Gene3D" id="3.20.20.370">
    <property type="entry name" value="Glycoside hydrolase/deacetylase"/>
    <property type="match status" value="1"/>
</dbReference>
<dbReference type="HAMAP" id="MF_00691">
    <property type="entry name" value="PxpA"/>
    <property type="match status" value="1"/>
</dbReference>
<dbReference type="InterPro" id="IPR011330">
    <property type="entry name" value="Glyco_hydro/deAcase_b/a-brl"/>
</dbReference>
<dbReference type="InterPro" id="IPR005501">
    <property type="entry name" value="LamB/YcsF/PxpA-like"/>
</dbReference>
<dbReference type="NCBIfam" id="NF003814">
    <property type="entry name" value="PRK05406.1-3"/>
    <property type="match status" value="1"/>
</dbReference>
<dbReference type="NCBIfam" id="NF003815">
    <property type="entry name" value="PRK05406.1-4"/>
    <property type="match status" value="1"/>
</dbReference>
<dbReference type="NCBIfam" id="NF003816">
    <property type="entry name" value="PRK05406.1-5"/>
    <property type="match status" value="1"/>
</dbReference>
<dbReference type="PANTHER" id="PTHR30292:SF0">
    <property type="entry name" value="5-OXOPROLINASE SUBUNIT A"/>
    <property type="match status" value="1"/>
</dbReference>
<dbReference type="PANTHER" id="PTHR30292">
    <property type="entry name" value="UNCHARACTERIZED PROTEIN YBGL-RELATED"/>
    <property type="match status" value="1"/>
</dbReference>
<dbReference type="Pfam" id="PF03746">
    <property type="entry name" value="LamB_YcsF"/>
    <property type="match status" value="1"/>
</dbReference>
<dbReference type="SUPFAM" id="SSF88713">
    <property type="entry name" value="Glycoside hydrolase/deacetylase"/>
    <property type="match status" value="1"/>
</dbReference>
<comment type="function">
    <text evidence="1">Catalyzes the cleavage of 5-oxoproline to form L-glutamate coupled to the hydrolysis of ATP to ADP and inorganic phosphate.</text>
</comment>
<comment type="catalytic activity">
    <reaction evidence="1">
        <text>5-oxo-L-proline + ATP + 2 H2O = L-glutamate + ADP + phosphate + H(+)</text>
        <dbReference type="Rhea" id="RHEA:10348"/>
        <dbReference type="ChEBI" id="CHEBI:15377"/>
        <dbReference type="ChEBI" id="CHEBI:15378"/>
        <dbReference type="ChEBI" id="CHEBI:29985"/>
        <dbReference type="ChEBI" id="CHEBI:30616"/>
        <dbReference type="ChEBI" id="CHEBI:43474"/>
        <dbReference type="ChEBI" id="CHEBI:58402"/>
        <dbReference type="ChEBI" id="CHEBI:456216"/>
        <dbReference type="EC" id="3.5.2.9"/>
    </reaction>
</comment>
<comment type="subunit">
    <text evidence="1">Forms a complex composed of PxpA, PxpB and PxpC.</text>
</comment>
<comment type="similarity">
    <text evidence="1">Belongs to the LamB/PxpA family.</text>
</comment>
<organism>
    <name type="scientific">Chromobacterium violaceum (strain ATCC 12472 / DSM 30191 / JCM 1249 / CCUG 213 / NBRC 12614 / NCIMB 9131 / NCTC 9757 / MK)</name>
    <dbReference type="NCBI Taxonomy" id="243365"/>
    <lineage>
        <taxon>Bacteria</taxon>
        <taxon>Pseudomonadati</taxon>
        <taxon>Pseudomonadota</taxon>
        <taxon>Betaproteobacteria</taxon>
        <taxon>Neisseriales</taxon>
        <taxon>Chromobacteriaceae</taxon>
        <taxon>Chromobacterium</taxon>
    </lineage>
</organism>
<name>PXPA_CHRVO</name>
<feature type="chain" id="PRO_0000185002" description="5-oxoprolinase subunit A">
    <location>
        <begin position="1"/>
        <end position="245"/>
    </location>
</feature>
<evidence type="ECO:0000255" key="1">
    <source>
        <dbReference type="HAMAP-Rule" id="MF_00691"/>
    </source>
</evidence>
<sequence length="245" mass="25969">MKIDLNADLGEGCGDDAALLGLVSSANIACGWHAGDADTMRRTVLLALEKGVAIGAHPGFPDRENFGRSEMRLPMEAARAGLLYQLGALDAIVRAEGGALRHVKPHGALYNQAAREPELAAVLARAIRDFNPALRAVGLAGGCFIDACRAEGLEVWQEGFADRGYRADGSLVPRGLPGALLQDDSAMLAQAEDMALRQTVAAVNGLRIPARVDTLCLHGDGEHALRFARLLRERLEALGVEICAD</sequence>